<dbReference type="EC" id="3.6.5.4" evidence="1"/>
<dbReference type="EMBL" id="AY484668">
    <property type="protein sequence ID" value="AAR28967.1"/>
    <property type="molecule type" value="Genomic_DNA"/>
</dbReference>
<dbReference type="RefSeq" id="WP_053767748.1">
    <property type="nucleotide sequence ID" value="NZ_LHCI01000106.1"/>
</dbReference>
<dbReference type="PDB" id="1OKK">
    <property type="method" value="X-ray"/>
    <property type="resolution" value="2.05 A"/>
    <property type="chains" value="D=2-304"/>
</dbReference>
<dbReference type="PDB" id="1RJ9">
    <property type="method" value="X-ray"/>
    <property type="resolution" value="1.90 A"/>
    <property type="chains" value="A=1-304"/>
</dbReference>
<dbReference type="PDB" id="2CNW">
    <property type="method" value="X-ray"/>
    <property type="resolution" value="2.39 A"/>
    <property type="chains" value="D/E/F=21-304"/>
</dbReference>
<dbReference type="PDB" id="2IYL">
    <property type="method" value="X-ray"/>
    <property type="resolution" value="2.10 A"/>
    <property type="chains" value="D=21-304"/>
</dbReference>
<dbReference type="PDB" id="2J7P">
    <property type="method" value="X-ray"/>
    <property type="resolution" value="1.97 A"/>
    <property type="chains" value="D/E=22-304"/>
</dbReference>
<dbReference type="PDB" id="2Q9A">
    <property type="method" value="X-ray"/>
    <property type="resolution" value="2.24 A"/>
    <property type="chains" value="A/B=1-304"/>
</dbReference>
<dbReference type="PDB" id="2Q9B">
    <property type="method" value="X-ray"/>
    <property type="resolution" value="2.30 A"/>
    <property type="chains" value="A/B=1-304"/>
</dbReference>
<dbReference type="PDB" id="2Q9C">
    <property type="method" value="X-ray"/>
    <property type="resolution" value="2.20 A"/>
    <property type="chains" value="A/B=1-304"/>
</dbReference>
<dbReference type="PDB" id="2XKV">
    <property type="method" value="EM"/>
    <property type="resolution" value="13.50 A"/>
    <property type="chains" value="D=2-304"/>
</dbReference>
<dbReference type="PDBsum" id="1OKK"/>
<dbReference type="PDBsum" id="1RJ9"/>
<dbReference type="PDBsum" id="2CNW"/>
<dbReference type="PDBsum" id="2IYL"/>
<dbReference type="PDBsum" id="2J7P"/>
<dbReference type="PDBsum" id="2Q9A"/>
<dbReference type="PDBsum" id="2Q9B"/>
<dbReference type="PDBsum" id="2Q9C"/>
<dbReference type="PDBsum" id="2XKV"/>
<dbReference type="EMDB" id="EMD-1762"/>
<dbReference type="SMR" id="P83749"/>
<dbReference type="IntAct" id="P83749">
    <property type="interactions" value="2"/>
</dbReference>
<dbReference type="EvolutionaryTrace" id="P83749"/>
<dbReference type="GO" id="GO:0005737">
    <property type="term" value="C:cytoplasm"/>
    <property type="evidence" value="ECO:0007669"/>
    <property type="project" value="UniProtKB-SubCell"/>
</dbReference>
<dbReference type="GO" id="GO:0005886">
    <property type="term" value="C:plasma membrane"/>
    <property type="evidence" value="ECO:0007669"/>
    <property type="project" value="UniProtKB-SubCell"/>
</dbReference>
<dbReference type="GO" id="GO:0016887">
    <property type="term" value="F:ATP hydrolysis activity"/>
    <property type="evidence" value="ECO:0007669"/>
    <property type="project" value="InterPro"/>
</dbReference>
<dbReference type="GO" id="GO:0005525">
    <property type="term" value="F:GTP binding"/>
    <property type="evidence" value="ECO:0007669"/>
    <property type="project" value="UniProtKB-UniRule"/>
</dbReference>
<dbReference type="GO" id="GO:0003924">
    <property type="term" value="F:GTPase activity"/>
    <property type="evidence" value="ECO:0007669"/>
    <property type="project" value="UniProtKB-UniRule"/>
</dbReference>
<dbReference type="GO" id="GO:0005047">
    <property type="term" value="F:signal recognition particle binding"/>
    <property type="evidence" value="ECO:0007669"/>
    <property type="project" value="TreeGrafter"/>
</dbReference>
<dbReference type="GO" id="GO:0006614">
    <property type="term" value="P:SRP-dependent cotranslational protein targeting to membrane"/>
    <property type="evidence" value="ECO:0007669"/>
    <property type="project" value="InterPro"/>
</dbReference>
<dbReference type="CDD" id="cd17874">
    <property type="entry name" value="FtsY"/>
    <property type="match status" value="1"/>
</dbReference>
<dbReference type="FunFam" id="3.40.50.300:FF:000053">
    <property type="entry name" value="Signal recognition particle receptor FtsY"/>
    <property type="match status" value="1"/>
</dbReference>
<dbReference type="Gene3D" id="3.40.50.300">
    <property type="entry name" value="P-loop containing nucleotide triphosphate hydrolases"/>
    <property type="match status" value="1"/>
</dbReference>
<dbReference type="Gene3D" id="1.20.120.140">
    <property type="entry name" value="Signal recognition particle SRP54, nucleotide-binding domain"/>
    <property type="match status" value="1"/>
</dbReference>
<dbReference type="HAMAP" id="MF_00920">
    <property type="entry name" value="FtsY"/>
    <property type="match status" value="1"/>
</dbReference>
<dbReference type="InterPro" id="IPR003593">
    <property type="entry name" value="AAA+_ATPase"/>
</dbReference>
<dbReference type="InterPro" id="IPR027417">
    <property type="entry name" value="P-loop_NTPase"/>
</dbReference>
<dbReference type="InterPro" id="IPR013822">
    <property type="entry name" value="Signal_recog_particl_SRP54_hlx"/>
</dbReference>
<dbReference type="InterPro" id="IPR004390">
    <property type="entry name" value="SR_rcpt_FtsY"/>
</dbReference>
<dbReference type="InterPro" id="IPR036225">
    <property type="entry name" value="SRP/SRP_N"/>
</dbReference>
<dbReference type="InterPro" id="IPR000897">
    <property type="entry name" value="SRP54_GTPase_dom"/>
</dbReference>
<dbReference type="InterPro" id="IPR042101">
    <property type="entry name" value="SRP54_N_sf"/>
</dbReference>
<dbReference type="NCBIfam" id="TIGR00064">
    <property type="entry name" value="ftsY"/>
    <property type="match status" value="1"/>
</dbReference>
<dbReference type="PANTHER" id="PTHR43134">
    <property type="entry name" value="SIGNAL RECOGNITION PARTICLE RECEPTOR SUBUNIT ALPHA"/>
    <property type="match status" value="1"/>
</dbReference>
<dbReference type="PANTHER" id="PTHR43134:SF1">
    <property type="entry name" value="SIGNAL RECOGNITION PARTICLE RECEPTOR SUBUNIT ALPHA"/>
    <property type="match status" value="1"/>
</dbReference>
<dbReference type="Pfam" id="PF00448">
    <property type="entry name" value="SRP54"/>
    <property type="match status" value="1"/>
</dbReference>
<dbReference type="Pfam" id="PF02881">
    <property type="entry name" value="SRP54_N"/>
    <property type="match status" value="1"/>
</dbReference>
<dbReference type="SMART" id="SM00382">
    <property type="entry name" value="AAA"/>
    <property type="match status" value="1"/>
</dbReference>
<dbReference type="SMART" id="SM00962">
    <property type="entry name" value="SRP54"/>
    <property type="match status" value="1"/>
</dbReference>
<dbReference type="SMART" id="SM00963">
    <property type="entry name" value="SRP54_N"/>
    <property type="match status" value="1"/>
</dbReference>
<dbReference type="SUPFAM" id="SSF47364">
    <property type="entry name" value="Domain of the SRP/SRP receptor G-proteins"/>
    <property type="match status" value="1"/>
</dbReference>
<dbReference type="SUPFAM" id="SSF52540">
    <property type="entry name" value="P-loop containing nucleoside triphosphate hydrolases"/>
    <property type="match status" value="1"/>
</dbReference>
<dbReference type="PROSITE" id="PS00300">
    <property type="entry name" value="SRP54"/>
    <property type="match status" value="1"/>
</dbReference>
<accession>P83749</accession>
<comment type="function">
    <text evidence="1">Involved in targeting and insertion of nascent membrane proteins into the cytoplasmic membrane. Acts as a receptor for the complex formed by the signal recognition particle (SRP) and the ribosome-nascent chain (RNC).</text>
</comment>
<comment type="catalytic activity">
    <reaction evidence="1">
        <text>GTP + H2O = GDP + phosphate + H(+)</text>
        <dbReference type="Rhea" id="RHEA:19669"/>
        <dbReference type="ChEBI" id="CHEBI:15377"/>
        <dbReference type="ChEBI" id="CHEBI:15378"/>
        <dbReference type="ChEBI" id="CHEBI:37565"/>
        <dbReference type="ChEBI" id="CHEBI:43474"/>
        <dbReference type="ChEBI" id="CHEBI:58189"/>
        <dbReference type="EC" id="3.6.5.4"/>
    </reaction>
</comment>
<comment type="subunit">
    <text evidence="1">Part of the signal recognition particle protein translocation system, which is composed of SRP and FtsY.</text>
</comment>
<comment type="interaction">
    <interactant intactId="EBI-1037899">
        <id>P83749</id>
    </interactant>
    <interactant intactId="EBI-1037906">
        <id>O07347</id>
        <label>ffh</label>
    </interactant>
    <organismsDiffer>false</organismsDiffer>
    <experiments>3</experiments>
</comment>
<comment type="subcellular location">
    <subcellularLocation>
        <location>Cell membrane</location>
        <topology>Peripheral membrane protein</topology>
        <orientation>Cytoplasmic side</orientation>
    </subcellularLocation>
    <subcellularLocation>
        <location evidence="1">Cytoplasm</location>
    </subcellularLocation>
</comment>
<comment type="PTM">
    <text>Sensitive to endogenous proteolytic cleavage between residues 18 and 19 and between residues 86 and 87.</text>
</comment>
<comment type="similarity">
    <text evidence="1">Belongs to the GTP-binding SRP family. FtsY subfamily.</text>
</comment>
<evidence type="ECO:0000255" key="1">
    <source>
        <dbReference type="HAMAP-Rule" id="MF_00920"/>
    </source>
</evidence>
<evidence type="ECO:0000269" key="2">
    <source>
    </source>
</evidence>
<evidence type="ECO:0000305" key="3"/>
<evidence type="ECO:0000312" key="4">
    <source>
        <dbReference type="EMBL" id="AAR28967.1"/>
    </source>
</evidence>
<evidence type="ECO:0007829" key="5">
    <source>
        <dbReference type="PDB" id="1RJ9"/>
    </source>
</evidence>
<evidence type="ECO:0007829" key="6">
    <source>
        <dbReference type="PDB" id="2IYL"/>
    </source>
</evidence>
<evidence type="ECO:0007829" key="7">
    <source>
        <dbReference type="PDB" id="2Q9A"/>
    </source>
</evidence>
<evidence type="ECO:0007829" key="8">
    <source>
        <dbReference type="PDB" id="2Q9C"/>
    </source>
</evidence>
<reference evidence="3" key="1">
    <citation type="journal article" date="2002" name="Biochim. Biophys. Acta">
        <title>Conformational change of the N-domain on formation of the complex between the GTPase domains of Thermus aquaticus Ffh and FtsY.</title>
        <authorList>
            <person name="Shepotinovskaya I.V."/>
            <person name="Freymann D.M."/>
        </authorList>
    </citation>
    <scope>NUCLEOTIDE SEQUENCE [GENOMIC DNA]</scope>
    <scope>PROTEIN SEQUENCE OF 2-6; 19-25 AND 87-93</scope>
    <scope>MUTAGENESIS OF ARG-17; LEU-18; ARG-86; LYS-87 AND LEU-88</scope>
</reference>
<reference evidence="3" key="2">
    <citation type="journal article" date="2003" name="Acta Crystallogr. D">
        <title>Crystallization of the GMPPCP complex of the NG domains of Thermus aquaticus Ffh and FtsY.</title>
        <authorList>
            <person name="Shepotinovskaya I.V."/>
            <person name="Focia P.J."/>
            <person name="Freymann D.M."/>
        </authorList>
    </citation>
    <scope>CRYSTALLIZATION</scope>
    <scope>X-RAY CRYSTALLOGRAPHY (2.0 ANGSTROMS)</scope>
</reference>
<proteinExistence type="evidence at protein level"/>
<organism evidence="4">
    <name type="scientific">Thermus aquaticus</name>
    <dbReference type="NCBI Taxonomy" id="271"/>
    <lineage>
        <taxon>Bacteria</taxon>
        <taxon>Thermotogati</taxon>
        <taxon>Deinococcota</taxon>
        <taxon>Deinococci</taxon>
        <taxon>Thermales</taxon>
        <taxon>Thermaceae</taxon>
        <taxon>Thermus</taxon>
    </lineage>
</organism>
<sequence>MGFFDRLKAGLAKTRERLLKAIPWGGNLEEVLEELEMALLAADVGLSATEEILQEVRASGRKDLKEAVKEKLVGMLEPDERRATLRKLGFNPQKPKPVEPKGRVVLVVGVNGVGKTTTIAKLGRYYQNLGKKVMFCAGDTFRAAGGTQLSEWGKRLSIPVIQGPEGTDPAALAYDAVQAMKARGYDLLFVDTAGRLHTKHNLMEELKKVKRAIAKADPEEPKEVWLVLDAVTGQNGLEQAKKFHEAVGLTGVIVTKLDGTAKGGVLIPIVRTLKVPIKFVGVGEGPDDLQPFDPEAFVEALLED</sequence>
<gene>
    <name evidence="1" type="primary">ftsY</name>
</gene>
<name>FTSY_THEAQ</name>
<protein>
    <recommendedName>
        <fullName evidence="1">Signal recognition particle receptor FtsY</fullName>
        <shortName evidence="1">SRP receptor</shortName>
        <ecNumber evidence="1">3.6.5.4</ecNumber>
    </recommendedName>
</protein>
<keyword id="KW-0002">3D-structure</keyword>
<keyword id="KW-1003">Cell membrane</keyword>
<keyword id="KW-0963">Cytoplasm</keyword>
<keyword id="KW-0903">Direct protein sequencing</keyword>
<keyword id="KW-0342">GTP-binding</keyword>
<keyword id="KW-0378">Hydrolase</keyword>
<keyword id="KW-0472">Membrane</keyword>
<keyword id="KW-0547">Nucleotide-binding</keyword>
<keyword id="KW-0675">Receptor</keyword>
<feature type="initiator methionine" description="Removed" evidence="2">
    <location>
        <position position="1"/>
    </location>
</feature>
<feature type="chain" id="PRO_0000101147" description="Signal recognition particle receptor FtsY">
    <location>
        <begin position="2"/>
        <end position="304"/>
    </location>
</feature>
<feature type="binding site" evidence="1">
    <location>
        <begin position="109"/>
        <end position="116"/>
    </location>
    <ligand>
        <name>GTP</name>
        <dbReference type="ChEBI" id="CHEBI:37565"/>
    </ligand>
</feature>
<feature type="binding site" evidence="1">
    <location>
        <begin position="191"/>
        <end position="195"/>
    </location>
    <ligand>
        <name>GTP</name>
        <dbReference type="ChEBI" id="CHEBI:37565"/>
    </ligand>
</feature>
<feature type="binding site" evidence="1">
    <location>
        <begin position="255"/>
        <end position="258"/>
    </location>
    <ligand>
        <name>GTP</name>
        <dbReference type="ChEBI" id="CHEBI:37565"/>
    </ligand>
</feature>
<feature type="mutagenesis site" description="No effect on proteolysis; when associated with M-18." evidence="2">
    <original>R</original>
    <variation>Q</variation>
    <location>
        <position position="17"/>
    </location>
</feature>
<feature type="mutagenesis site" description="No effect on proteolysis; when associated with Q-17." evidence="2">
    <original>L</original>
    <variation>M</variation>
    <location>
        <position position="18"/>
    </location>
</feature>
<feature type="mutagenesis site" description="No effect proteolysis; when associated with Q-87 and I-88." evidence="2">
    <original>R</original>
    <variation>Q</variation>
    <location>
        <position position="86"/>
    </location>
</feature>
<feature type="mutagenesis site" description="No effect proteolysis; when associated with Q-86 and I-88." evidence="2">
    <original>K</original>
    <variation>Q</variation>
    <location>
        <position position="87"/>
    </location>
</feature>
<feature type="mutagenesis site" description="No effect proteolysis; when associated with Q-86 and Q-87." evidence="2">
    <original>L</original>
    <variation>I</variation>
    <location>
        <position position="88"/>
    </location>
</feature>
<feature type="helix" evidence="8">
    <location>
        <begin position="3"/>
        <end position="10"/>
    </location>
</feature>
<feature type="helix" evidence="8">
    <location>
        <begin position="12"/>
        <end position="15"/>
    </location>
</feature>
<feature type="turn" evidence="8">
    <location>
        <begin position="16"/>
        <end position="18"/>
    </location>
</feature>
<feature type="helix" evidence="8">
    <location>
        <begin position="19"/>
        <end position="21"/>
    </location>
</feature>
<feature type="helix" evidence="5">
    <location>
        <begin position="28"/>
        <end position="41"/>
    </location>
</feature>
<feature type="helix" evidence="5">
    <location>
        <begin position="46"/>
        <end position="58"/>
    </location>
</feature>
<feature type="helix" evidence="5">
    <location>
        <begin position="66"/>
        <end position="72"/>
    </location>
</feature>
<feature type="turn" evidence="5">
    <location>
        <begin position="73"/>
        <end position="76"/>
    </location>
</feature>
<feature type="helix" evidence="5">
    <location>
        <begin position="81"/>
        <end position="87"/>
    </location>
</feature>
<feature type="strand" evidence="5">
    <location>
        <begin position="101"/>
        <end position="108"/>
    </location>
</feature>
<feature type="helix" evidence="5">
    <location>
        <begin position="115"/>
        <end position="127"/>
    </location>
</feature>
<feature type="turn" evidence="5">
    <location>
        <begin position="128"/>
        <end position="130"/>
    </location>
</feature>
<feature type="strand" evidence="5">
    <location>
        <begin position="133"/>
        <end position="136"/>
    </location>
</feature>
<feature type="turn" evidence="5">
    <location>
        <begin position="143"/>
        <end position="146"/>
    </location>
</feature>
<feature type="helix" evidence="5">
    <location>
        <begin position="147"/>
        <end position="156"/>
    </location>
</feature>
<feature type="strand" evidence="6">
    <location>
        <begin position="164"/>
        <end position="166"/>
    </location>
</feature>
<feature type="helix" evidence="5">
    <location>
        <begin position="169"/>
        <end position="183"/>
    </location>
</feature>
<feature type="strand" evidence="5">
    <location>
        <begin position="186"/>
        <end position="190"/>
    </location>
</feature>
<feature type="helix" evidence="5">
    <location>
        <begin position="200"/>
        <end position="216"/>
    </location>
</feature>
<feature type="strand" evidence="5">
    <location>
        <begin position="222"/>
        <end position="229"/>
    </location>
</feature>
<feature type="helix" evidence="7">
    <location>
        <begin position="230"/>
        <end position="234"/>
    </location>
</feature>
<feature type="helix" evidence="5">
    <location>
        <begin position="235"/>
        <end position="247"/>
    </location>
</feature>
<feature type="strand" evidence="5">
    <location>
        <begin position="250"/>
        <end position="255"/>
    </location>
</feature>
<feature type="strand" evidence="6">
    <location>
        <begin position="259"/>
        <end position="261"/>
    </location>
</feature>
<feature type="helix" evidence="6">
    <location>
        <begin position="263"/>
        <end position="265"/>
    </location>
</feature>
<feature type="helix" evidence="5">
    <location>
        <begin position="266"/>
        <end position="273"/>
    </location>
</feature>
<feature type="strand" evidence="5">
    <location>
        <begin position="277"/>
        <end position="281"/>
    </location>
</feature>
<feature type="strand" evidence="5">
    <location>
        <begin position="283"/>
        <end position="285"/>
    </location>
</feature>
<feature type="helix" evidence="8">
    <location>
        <begin position="286"/>
        <end position="288"/>
    </location>
</feature>
<feature type="strand" evidence="5">
    <location>
        <begin position="289"/>
        <end position="291"/>
    </location>
</feature>
<feature type="helix" evidence="5">
    <location>
        <begin position="294"/>
        <end position="301"/>
    </location>
</feature>